<keyword id="KW-0903">Direct protein sequencing</keyword>
<keyword id="KW-0325">Glycoprotein</keyword>
<keyword id="KW-0326">Glycosidase</keyword>
<keyword id="KW-0378">Hydrolase</keyword>
<keyword id="KW-0732">Signal</keyword>
<name>AGLU_BETVU</name>
<proteinExistence type="evidence at protein level"/>
<comment type="function">
    <text>High activity for alpha-glucan.</text>
</comment>
<comment type="catalytic activity">
    <reaction>
        <text>Hydrolysis of terminal, non-reducing (1-&gt;4)-linked alpha-D-glucose residues with release of alpha-D-glucose.</text>
        <dbReference type="EC" id="3.2.1.20"/>
    </reaction>
</comment>
<comment type="PTM">
    <text>The N-terminus is blocked.</text>
</comment>
<comment type="similarity">
    <text evidence="5">Belongs to the glycosyl hydrolase 31 family.</text>
</comment>
<dbReference type="EC" id="3.2.1.20"/>
<dbReference type="EMBL" id="D89615">
    <property type="protein sequence ID" value="BAA20343.1"/>
    <property type="molecule type" value="mRNA"/>
</dbReference>
<dbReference type="PIR" id="JC5463">
    <property type="entry name" value="JC5463"/>
</dbReference>
<dbReference type="SMR" id="O04931"/>
<dbReference type="ChEMBL" id="CHEMBL4348"/>
<dbReference type="CAZy" id="GH31">
    <property type="family name" value="Glycoside Hydrolase Family 31"/>
</dbReference>
<dbReference type="GO" id="GO:0004558">
    <property type="term" value="F:alpha-1,4-glucosidase activity"/>
    <property type="evidence" value="ECO:0000315"/>
    <property type="project" value="UniProtKB"/>
</dbReference>
<dbReference type="GO" id="GO:0030246">
    <property type="term" value="F:carbohydrate binding"/>
    <property type="evidence" value="ECO:0007669"/>
    <property type="project" value="InterPro"/>
</dbReference>
<dbReference type="GO" id="GO:0005975">
    <property type="term" value="P:carbohydrate metabolic process"/>
    <property type="evidence" value="ECO:0007669"/>
    <property type="project" value="InterPro"/>
</dbReference>
<dbReference type="CDD" id="cd06602">
    <property type="entry name" value="GH31_MGAM_SI_GAA"/>
    <property type="match status" value="1"/>
</dbReference>
<dbReference type="CDD" id="cd14752">
    <property type="entry name" value="GH31_N"/>
    <property type="match status" value="1"/>
</dbReference>
<dbReference type="FunFam" id="2.60.40.1180:FF:000044">
    <property type="entry name" value="Alpha-glucosidase 1"/>
    <property type="match status" value="1"/>
</dbReference>
<dbReference type="FunFam" id="2.60.40.1760:FF:000006">
    <property type="entry name" value="Alpha-glucosidase 1"/>
    <property type="match status" value="1"/>
</dbReference>
<dbReference type="FunFam" id="3.20.20.80:FF:000016">
    <property type="entry name" value="Maltase-glucoamylase, intestinal"/>
    <property type="match status" value="1"/>
</dbReference>
<dbReference type="Gene3D" id="3.20.20.80">
    <property type="entry name" value="Glycosidases"/>
    <property type="match status" value="1"/>
</dbReference>
<dbReference type="Gene3D" id="2.60.40.1760">
    <property type="entry name" value="glycosyl hydrolase (family 31)"/>
    <property type="match status" value="1"/>
</dbReference>
<dbReference type="Gene3D" id="2.60.40.1180">
    <property type="entry name" value="Golgi alpha-mannosidase II"/>
    <property type="match status" value="2"/>
</dbReference>
<dbReference type="InterPro" id="IPR011013">
    <property type="entry name" value="Gal_mutarotase_sf_dom"/>
</dbReference>
<dbReference type="InterPro" id="IPR030458">
    <property type="entry name" value="Glyco_hydro_31_AS"/>
</dbReference>
<dbReference type="InterPro" id="IPR048395">
    <property type="entry name" value="Glyco_hydro_31_C"/>
</dbReference>
<dbReference type="InterPro" id="IPR030459">
    <property type="entry name" value="Glyco_hydro_31_CS"/>
</dbReference>
<dbReference type="InterPro" id="IPR025887">
    <property type="entry name" value="Glyco_hydro_31_N_dom"/>
</dbReference>
<dbReference type="InterPro" id="IPR000322">
    <property type="entry name" value="Glyco_hydro_31_TIM"/>
</dbReference>
<dbReference type="InterPro" id="IPR013780">
    <property type="entry name" value="Glyco_hydro_b"/>
</dbReference>
<dbReference type="InterPro" id="IPR017853">
    <property type="entry name" value="Glycoside_hydrolase_SF"/>
</dbReference>
<dbReference type="PANTHER" id="PTHR22762">
    <property type="entry name" value="ALPHA-GLUCOSIDASE"/>
    <property type="match status" value="1"/>
</dbReference>
<dbReference type="PANTHER" id="PTHR22762:SF133">
    <property type="entry name" value="P-TYPE DOMAIN-CONTAINING PROTEIN"/>
    <property type="match status" value="1"/>
</dbReference>
<dbReference type="Pfam" id="PF13802">
    <property type="entry name" value="Gal_mutarotas_2"/>
    <property type="match status" value="1"/>
</dbReference>
<dbReference type="Pfam" id="PF01055">
    <property type="entry name" value="Glyco_hydro_31_2nd"/>
    <property type="match status" value="1"/>
</dbReference>
<dbReference type="Pfam" id="PF21365">
    <property type="entry name" value="Glyco_hydro_31_3rd"/>
    <property type="match status" value="1"/>
</dbReference>
<dbReference type="SUPFAM" id="SSF51445">
    <property type="entry name" value="(Trans)glycosidases"/>
    <property type="match status" value="1"/>
</dbReference>
<dbReference type="SUPFAM" id="SSF74650">
    <property type="entry name" value="Galactose mutarotase-like"/>
    <property type="match status" value="1"/>
</dbReference>
<dbReference type="SUPFAM" id="SSF51011">
    <property type="entry name" value="Glycosyl hydrolase domain"/>
    <property type="match status" value="1"/>
</dbReference>
<dbReference type="PROSITE" id="PS00129">
    <property type="entry name" value="GLYCOSYL_HYDROL_F31_1"/>
    <property type="match status" value="1"/>
</dbReference>
<dbReference type="PROSITE" id="PS00707">
    <property type="entry name" value="GLYCOSYL_HYDROL_F31_2"/>
    <property type="match status" value="1"/>
</dbReference>
<protein>
    <recommendedName>
        <fullName>Alpha-glucosidase</fullName>
        <ecNumber>3.2.1.20</ecNumber>
    </recommendedName>
    <alternativeName>
        <fullName>Maltase</fullName>
    </alternativeName>
</protein>
<evidence type="ECO:0000250" key="1"/>
<evidence type="ECO:0000255" key="2"/>
<evidence type="ECO:0000256" key="3">
    <source>
        <dbReference type="SAM" id="MobiDB-lite"/>
    </source>
</evidence>
<evidence type="ECO:0000269" key="4">
    <source>
    </source>
</evidence>
<evidence type="ECO:0000305" key="5"/>
<organism>
    <name type="scientific">Beta vulgaris</name>
    <name type="common">Sugar beet</name>
    <dbReference type="NCBI Taxonomy" id="161934"/>
    <lineage>
        <taxon>Eukaryota</taxon>
        <taxon>Viridiplantae</taxon>
        <taxon>Streptophyta</taxon>
        <taxon>Embryophyta</taxon>
        <taxon>Tracheophyta</taxon>
        <taxon>Spermatophyta</taxon>
        <taxon>Magnoliopsida</taxon>
        <taxon>eudicotyledons</taxon>
        <taxon>Gunneridae</taxon>
        <taxon>Pentapetalae</taxon>
        <taxon>Caryophyllales</taxon>
        <taxon>Chenopodiaceae</taxon>
        <taxon>Betoideae</taxon>
        <taxon>Beta</taxon>
    </lineage>
</organism>
<feature type="signal peptide" evidence="2">
    <location>
        <begin position="1"/>
        <end position="28"/>
    </location>
</feature>
<feature type="chain" id="PRO_0000018582" description="Alpha-glucosidase">
    <location>
        <begin position="29"/>
        <end position="913"/>
    </location>
</feature>
<feature type="region of interest" description="Disordered" evidence="3">
    <location>
        <begin position="106"/>
        <end position="142"/>
    </location>
</feature>
<feature type="compositionally biased region" description="Pro residues" evidence="3">
    <location>
        <begin position="112"/>
        <end position="123"/>
    </location>
</feature>
<feature type="active site" evidence="4">
    <location>
        <position position="469"/>
    </location>
</feature>
<feature type="active site" evidence="1">
    <location>
        <position position="472"/>
    </location>
</feature>
<feature type="active site" description="Proton donor" evidence="1">
    <location>
        <position position="568"/>
    </location>
</feature>
<feature type="glycosylation site" description="N-linked (GlcNAc...) asparagine" evidence="2">
    <location>
        <position position="54"/>
    </location>
</feature>
<feature type="glycosylation site" description="N-linked (GlcNAc...) asparagine" evidence="2">
    <location>
        <position position="404"/>
    </location>
</feature>
<feature type="glycosylation site" description="N-linked (GlcNAc...) asparagine" evidence="2">
    <location>
        <position position="495"/>
    </location>
</feature>
<feature type="glycosylation site" description="N-linked (GlcNAc...) asparagine" evidence="2">
    <location>
        <position position="517"/>
    </location>
</feature>
<feature type="glycosylation site" description="N-linked (GlcNAc...) asparagine" evidence="2">
    <location>
        <position position="728"/>
    </location>
</feature>
<feature type="glycosylation site" description="N-linked (GlcNAc...) asparagine" evidence="2">
    <location>
        <position position="823"/>
    </location>
</feature>
<sequence>MERSKLPRYICPTLAVVLPLVLCMVVEGATTSKNDNQGEAIGYGYQVKNAKVDNSTGKSLTALLQLIRNSPVYGPDIHFLSFTASFEEDDTLRIRFTDANNRRWEIPNEVLPRPPPPPSPPPLSSLQHLPKPIPQNQPTTTVLSHPHSDLAFTLFHTTPFGFTIYRKSTHDVLFDATPIPSNPTTFLIYKDQYLQLSSSLPAQQAHLYGLGEHTKPTFQLAHNQILTLWNADIASFNRDLNLYGSHPFYMDVRSSPMVGSTHGVFLLNSNGMDVEYTGDRITYKVIGGIIDLYIFAGRTPEMVLDQYTKLIGRPAPMPYWAFGFHQCRWGYRDVNEIETVVDKYAEARIPLEVMWTDIDYMDAFKDFTLDPVHFPLDKMQQFVTKLHRNGQRYVPILDPGINTNKSYGTFIRGMQSNVFIKRNGNPYLGSVWPGPVYYPDFLDPAARSFWVDEIKRFRDILPIDGIWIDMNEASNFITSAPTPGSTLDNPPYKINNSGGRVPINSKTIPATAMHYGNVTEYNAHNLYGFLESQATREALVRPATRGPFLLSRSTFAGSGKYTAHWTGDNAARWDDLQYSIPTMLNFGLFGMPMIGADICGFAESTTEELCCRWIQLGAFYPFSRDHSARDTTHQELYLWESVAASARTVLGLRYELLPYYYTLMYDANLRGSPIARPLSFTFPDDVATYGISSQFLIGRGIMVSPVLQPGSSIVNAYSPRGNWVSLSNYTSSVSVSAGTYVSLSAPPDHINVHIHEGNIVAMQGEAMTTQAARSTPFHLLVVMSDHVASTGELFLDNGIEMDIGGPGGKWTLVRFFAESGINNLTISSEVVNRGYAMSQRWVMDKITILGLKRRVKIKEYTVQKDAGAIKVKGLGRRTSSHNQGGFFVSVISDLRQLVGQAFKLELEFEGATR</sequence>
<reference key="1">
    <citation type="journal article" date="1997" name="Biosci. Biotechnol. Biochem.">
        <title>Cloning and sequencing of a cDNA encoding alpha-glucosidase from sugar beet.</title>
        <authorList>
            <person name="Matsui H."/>
            <person name="Iwanami S."/>
            <person name="Ito H."/>
            <person name="Mori H."/>
            <person name="Honma M."/>
            <person name="Chiba S."/>
        </authorList>
    </citation>
    <scope>NUCLEOTIDE SEQUENCE [MRNA]</scope>
    <scope>PARTIAL PROTEIN SEQUENCE</scope>
    <source>
        <strain>cv. NK-152</strain>
    </source>
</reference>
<reference key="2">
    <citation type="journal article" date="1995" name="Biosci. Biotechnol. Biochem.">
        <title>Chemical modification and amino acid sequence of active site in sugar beet alpha-glucosidase.</title>
        <authorList>
            <person name="Iwanami S."/>
            <person name="Matsui H."/>
            <person name="Kimura A."/>
            <person name="Ito H."/>
            <person name="Mori H."/>
            <person name="Honma M."/>
            <person name="Chiba S."/>
        </authorList>
    </citation>
    <scope>ACTIVE SITE</scope>
    <scope>PROTEIN SEQUENCE OF 464-472</scope>
</reference>
<accession>O04931</accession>